<sequence length="156" mass="16618">MPEAPGPAPAALPARGTLLAFDFGLARIGVAVGELETRRASALLTLHGEASAPRFAAIAKLLDEWRPVGLVVGMPSHLDGTPHEMTARCRRFANQLHGRFGLPVLECDERLSSAAADAALAEAGTHDWRARKQVLDAVAAQIILQHFLDTHGHAKP</sequence>
<evidence type="ECO:0000255" key="1">
    <source>
        <dbReference type="HAMAP-Rule" id="MF_00651"/>
    </source>
</evidence>
<dbReference type="EC" id="3.1.-.-" evidence="1"/>
<dbReference type="EMBL" id="CR555306">
    <property type="protein sequence ID" value="CAI07075.1"/>
    <property type="molecule type" value="Genomic_DNA"/>
</dbReference>
<dbReference type="RefSeq" id="WP_011236800.1">
    <property type="nucleotide sequence ID" value="NC_006513.1"/>
</dbReference>
<dbReference type="SMR" id="Q5P6I6"/>
<dbReference type="STRING" id="76114.ebA1756"/>
<dbReference type="KEGG" id="eba:ebA1756"/>
<dbReference type="eggNOG" id="COG0816">
    <property type="taxonomic scope" value="Bacteria"/>
</dbReference>
<dbReference type="HOGENOM" id="CLU_098240_3_2_4"/>
<dbReference type="OrthoDB" id="9796140at2"/>
<dbReference type="Proteomes" id="UP000006552">
    <property type="component" value="Chromosome"/>
</dbReference>
<dbReference type="GO" id="GO:0005829">
    <property type="term" value="C:cytosol"/>
    <property type="evidence" value="ECO:0007669"/>
    <property type="project" value="TreeGrafter"/>
</dbReference>
<dbReference type="GO" id="GO:0004518">
    <property type="term" value="F:nuclease activity"/>
    <property type="evidence" value="ECO:0007669"/>
    <property type="project" value="UniProtKB-KW"/>
</dbReference>
<dbReference type="GO" id="GO:0000967">
    <property type="term" value="P:rRNA 5'-end processing"/>
    <property type="evidence" value="ECO:0007669"/>
    <property type="project" value="UniProtKB-UniRule"/>
</dbReference>
<dbReference type="CDD" id="cd16964">
    <property type="entry name" value="YqgF"/>
    <property type="match status" value="1"/>
</dbReference>
<dbReference type="Gene3D" id="3.30.420.140">
    <property type="entry name" value="YqgF/RNase H-like domain"/>
    <property type="match status" value="1"/>
</dbReference>
<dbReference type="HAMAP" id="MF_00651">
    <property type="entry name" value="Nuclease_YqgF"/>
    <property type="match status" value="1"/>
</dbReference>
<dbReference type="InterPro" id="IPR012337">
    <property type="entry name" value="RNaseH-like_sf"/>
</dbReference>
<dbReference type="InterPro" id="IPR005227">
    <property type="entry name" value="YqgF"/>
</dbReference>
<dbReference type="InterPro" id="IPR006641">
    <property type="entry name" value="YqgF/RNaseH-like_dom"/>
</dbReference>
<dbReference type="InterPro" id="IPR037027">
    <property type="entry name" value="YqgF/RNaseH-like_dom_sf"/>
</dbReference>
<dbReference type="NCBIfam" id="TIGR00250">
    <property type="entry name" value="RNAse_H_YqgF"/>
    <property type="match status" value="1"/>
</dbReference>
<dbReference type="PANTHER" id="PTHR33317">
    <property type="entry name" value="POLYNUCLEOTIDYL TRANSFERASE, RIBONUCLEASE H-LIKE SUPERFAMILY PROTEIN"/>
    <property type="match status" value="1"/>
</dbReference>
<dbReference type="PANTHER" id="PTHR33317:SF4">
    <property type="entry name" value="POLYNUCLEOTIDYL TRANSFERASE, RIBONUCLEASE H-LIKE SUPERFAMILY PROTEIN"/>
    <property type="match status" value="1"/>
</dbReference>
<dbReference type="Pfam" id="PF03652">
    <property type="entry name" value="RuvX"/>
    <property type="match status" value="1"/>
</dbReference>
<dbReference type="SMART" id="SM00732">
    <property type="entry name" value="YqgFc"/>
    <property type="match status" value="1"/>
</dbReference>
<dbReference type="SUPFAM" id="SSF53098">
    <property type="entry name" value="Ribonuclease H-like"/>
    <property type="match status" value="1"/>
</dbReference>
<keyword id="KW-0963">Cytoplasm</keyword>
<keyword id="KW-0378">Hydrolase</keyword>
<keyword id="KW-0540">Nuclease</keyword>
<keyword id="KW-1185">Reference proteome</keyword>
<keyword id="KW-0690">Ribosome biogenesis</keyword>
<accession>Q5P6I6</accession>
<reference key="1">
    <citation type="journal article" date="2005" name="Arch. Microbiol.">
        <title>The genome sequence of an anaerobic aromatic-degrading denitrifying bacterium, strain EbN1.</title>
        <authorList>
            <person name="Rabus R."/>
            <person name="Kube M."/>
            <person name="Heider J."/>
            <person name="Beck A."/>
            <person name="Heitmann K."/>
            <person name="Widdel F."/>
            <person name="Reinhardt R."/>
        </authorList>
    </citation>
    <scope>NUCLEOTIDE SEQUENCE [LARGE SCALE GENOMIC DNA]</scope>
    <source>
        <strain>DSM 19018 / LMG 30748 / EbN1</strain>
    </source>
</reference>
<feature type="chain" id="PRO_0000172013" description="Putative pre-16S rRNA nuclease">
    <location>
        <begin position="1"/>
        <end position="156"/>
    </location>
</feature>
<gene>
    <name type="ordered locus">AZOSEA09500</name>
    <name type="ORF">ebA1756</name>
</gene>
<comment type="function">
    <text evidence="1">Could be a nuclease involved in processing of the 5'-end of pre-16S rRNA.</text>
</comment>
<comment type="subcellular location">
    <subcellularLocation>
        <location evidence="1">Cytoplasm</location>
    </subcellularLocation>
</comment>
<comment type="similarity">
    <text evidence="1">Belongs to the YqgF nuclease family.</text>
</comment>
<proteinExistence type="inferred from homology"/>
<name>YQGF_AROAE</name>
<organism>
    <name type="scientific">Aromatoleum aromaticum (strain DSM 19018 / LMG 30748 / EbN1)</name>
    <name type="common">Azoarcus sp. (strain EbN1)</name>
    <dbReference type="NCBI Taxonomy" id="76114"/>
    <lineage>
        <taxon>Bacteria</taxon>
        <taxon>Pseudomonadati</taxon>
        <taxon>Pseudomonadota</taxon>
        <taxon>Betaproteobacteria</taxon>
        <taxon>Rhodocyclales</taxon>
        <taxon>Rhodocyclaceae</taxon>
        <taxon>Aromatoleum</taxon>
    </lineage>
</organism>
<protein>
    <recommendedName>
        <fullName evidence="1">Putative pre-16S rRNA nuclease</fullName>
        <ecNumber evidence="1">3.1.-.-</ecNumber>
    </recommendedName>
</protein>